<comment type="function">
    <text evidence="1">Could participate in abscisic acid-regulated gene expression.</text>
</comment>
<comment type="subunit">
    <text evidence="1">DNA-binding heterodimer.</text>
</comment>
<comment type="interaction">
    <interactant intactId="EBI-15201762">
        <id>Q9FMM7</id>
    </interactant>
    <interactant intactId="EBI-1998580">
        <id>Q8VZI9</id>
        <label>ENAP1</label>
    </interactant>
    <organismsDiffer>false</organismsDiffer>
    <experiments>3</experiments>
</comment>
<comment type="interaction">
    <interactant intactId="EBI-15201762">
        <id>Q9FMM7</id>
    </interactant>
    <interactant intactId="EBI-15192325">
        <id>Q8LPR5</id>
        <label>TCP4</label>
    </interactant>
    <organismsDiffer>false</organismsDiffer>
    <experiments>3</experiments>
</comment>
<comment type="subcellular location">
    <subcellularLocation>
        <location evidence="5">Nucleus</location>
    </subcellularLocation>
</comment>
<comment type="similarity">
    <text evidence="7">Belongs to the bZIP family. ABI5 subfamily.</text>
</comment>
<organism>
    <name type="scientific">Arabidopsis thaliana</name>
    <name type="common">Mouse-ear cress</name>
    <dbReference type="NCBI Taxonomy" id="3702"/>
    <lineage>
        <taxon>Eukaryota</taxon>
        <taxon>Viridiplantae</taxon>
        <taxon>Streptophyta</taxon>
        <taxon>Embryophyta</taxon>
        <taxon>Tracheophyta</taxon>
        <taxon>Spermatophyta</taxon>
        <taxon>Magnoliopsida</taxon>
        <taxon>eudicotyledons</taxon>
        <taxon>Gunneridae</taxon>
        <taxon>Pentapetalae</taxon>
        <taxon>rosids</taxon>
        <taxon>malvids</taxon>
        <taxon>Brassicales</taxon>
        <taxon>Brassicaceae</taxon>
        <taxon>Camelineae</taxon>
        <taxon>Arabidopsis</taxon>
    </lineage>
</organism>
<reference key="1">
    <citation type="journal article" date="2002" name="Plant Cell">
        <title>The homologous ABI5 and EEL transcription factors function antagonistically to fine-tune gene expression during late embryogenesis.</title>
        <authorList>
            <person name="Bensmihen S."/>
            <person name="Rippa S."/>
            <person name="Lambert G."/>
            <person name="Jublot D."/>
            <person name="Pautot V."/>
            <person name="Granier F."/>
            <person name="Giraudat J."/>
            <person name="Parcy F."/>
        </authorList>
    </citation>
    <scope>NUCLEOTIDE SEQUENCE [MRNA]</scope>
</reference>
<reference key="2">
    <citation type="journal article" date="1997" name="DNA Res.">
        <title>Structural analysis of Arabidopsis thaliana chromosome 5. III. Sequence features of the regions of 1,191,918 bp covered by seventeen physically assigned P1 clones.</title>
        <authorList>
            <person name="Nakamura Y."/>
            <person name="Sato S."/>
            <person name="Kaneko T."/>
            <person name="Kotani H."/>
            <person name="Asamizu E."/>
            <person name="Miyajima N."/>
            <person name="Tabata S."/>
        </authorList>
    </citation>
    <scope>NUCLEOTIDE SEQUENCE [LARGE SCALE GENOMIC DNA]</scope>
    <source>
        <strain>cv. Columbia</strain>
    </source>
</reference>
<reference key="3">
    <citation type="journal article" date="2017" name="Plant J.">
        <title>Araport11: a complete reannotation of the Arabidopsis thaliana reference genome.</title>
        <authorList>
            <person name="Cheng C.Y."/>
            <person name="Krishnakumar V."/>
            <person name="Chan A.P."/>
            <person name="Thibaud-Nissen F."/>
            <person name="Schobel S."/>
            <person name="Town C.D."/>
        </authorList>
    </citation>
    <scope>GENOME REANNOTATION</scope>
    <source>
        <strain>cv. Columbia</strain>
    </source>
</reference>
<reference key="4">
    <citation type="journal article" date="2002" name="Trends Plant Sci.">
        <title>bZIP transcription factors in Arabidopsis.</title>
        <authorList>
            <person name="Jakoby M."/>
            <person name="Weisshaar B."/>
            <person name="Droege-Laser W."/>
            <person name="Vicente-Carbajosa J."/>
            <person name="Tiedemann J."/>
            <person name="Kroj T."/>
            <person name="Parcy F."/>
        </authorList>
    </citation>
    <scope>GENE FAMILY</scope>
    <scope>NOMENCLATURE</scope>
</reference>
<accession>Q9FMM7</accession>
<feature type="chain" id="PRO_0000369613" description="ABSCISIC ACID-INSENSITIVE 5-like protein 8">
    <location>
        <begin position="1"/>
        <end position="370"/>
    </location>
</feature>
<feature type="domain" description="bZIP" evidence="5">
    <location>
        <begin position="293"/>
        <end position="356"/>
    </location>
</feature>
<feature type="region of interest" description="Disordered" evidence="6">
    <location>
        <begin position="56"/>
        <end position="77"/>
    </location>
</feature>
<feature type="region of interest" description="Disordered" evidence="6">
    <location>
        <begin position="260"/>
        <end position="281"/>
    </location>
</feature>
<feature type="region of interest" description="Basic motif" evidence="5">
    <location>
        <begin position="295"/>
        <end position="314"/>
    </location>
</feature>
<feature type="region of interest" description="Leucine-zipper" evidence="5">
    <location>
        <begin position="328"/>
        <end position="342"/>
    </location>
</feature>
<feature type="region of interest" description="Disordered" evidence="6">
    <location>
        <begin position="349"/>
        <end position="370"/>
    </location>
</feature>
<feature type="compositionally biased region" description="Polar residues" evidence="6">
    <location>
        <begin position="62"/>
        <end position="77"/>
    </location>
</feature>
<feature type="compositionally biased region" description="Polar residues" evidence="6">
    <location>
        <begin position="260"/>
        <end position="278"/>
    </location>
</feature>
<feature type="compositionally biased region" description="Basic and acidic residues" evidence="6">
    <location>
        <begin position="354"/>
        <end position="370"/>
    </location>
</feature>
<feature type="modified residue" description="Phosphoserine" evidence="4">
    <location>
        <position position="25"/>
    </location>
</feature>
<feature type="modified residue" description="Phosphoserine" evidence="2">
    <location>
        <position position="44"/>
    </location>
</feature>
<feature type="modified residue" description="Phosphoserine" evidence="3">
    <location>
        <position position="69"/>
    </location>
</feature>
<feature type="modified residue" description="Phosphothreonine" evidence="4">
    <location>
        <position position="111"/>
    </location>
</feature>
<sequence>MDSYWRLKNLVNDLPVSTSLSRQGSIYSWTVDQFQTSLGLDCGSMNMDELVKHISSAEETQEGSQRQGSTTLPPTLSKQNVGEVWKSITEEKHTNNNGGVTNITHLQGQQTLGEITLEEFFIRAGARGGNTNGGSIHDSSSSISGNPHTSLGVQIQPKAMVSDFMNNMVPRSHDSYLHQNVNGSMSTYQPQQSIMSMPNGYSYGKQIRFSNGSLGSGNQSLQDTKRSLVPSVATIPSEAITCSPVTPFPTLNGKQKINGESSLLSPSPYISNGSTSTRGGKINSEITAEKQFVDKKLRRKIKNRESAARSRARKQAQTMEVEVELENLKKDYEELLKQHVELRKRQMEPGMISLHERPERKLRRTKSDIK</sequence>
<keyword id="KW-0938">Abscisic acid signaling pathway</keyword>
<keyword id="KW-0010">Activator</keyword>
<keyword id="KW-0238">DNA-binding</keyword>
<keyword id="KW-0539">Nucleus</keyword>
<keyword id="KW-0597">Phosphoprotein</keyword>
<keyword id="KW-1185">Reference proteome</keyword>
<keyword id="KW-0804">Transcription</keyword>
<keyword id="KW-0805">Transcription regulation</keyword>
<protein>
    <recommendedName>
        <fullName>ABSCISIC ACID-INSENSITIVE 5-like protein 8</fullName>
    </recommendedName>
    <alternativeName>
        <fullName>bZIP transcription factor 15</fullName>
        <shortName>AtbZIP15</shortName>
    </alternativeName>
</protein>
<evidence type="ECO:0000250" key="1"/>
<evidence type="ECO:0000250" key="2">
    <source>
        <dbReference type="UniProtKB" id="Q9LES3"/>
    </source>
</evidence>
<evidence type="ECO:0000250" key="3">
    <source>
        <dbReference type="UniProtKB" id="Q9M7Q2"/>
    </source>
</evidence>
<evidence type="ECO:0000255" key="4"/>
<evidence type="ECO:0000255" key="5">
    <source>
        <dbReference type="PROSITE-ProRule" id="PRU00978"/>
    </source>
</evidence>
<evidence type="ECO:0000256" key="6">
    <source>
        <dbReference type="SAM" id="MobiDB-lite"/>
    </source>
</evidence>
<evidence type="ECO:0000305" key="7"/>
<proteinExistence type="evidence at protein level"/>
<dbReference type="EMBL" id="AJ419599">
    <property type="protein sequence ID" value="CAD11866.1"/>
    <property type="molecule type" value="mRNA"/>
</dbReference>
<dbReference type="EMBL" id="AB008264">
    <property type="protein sequence ID" value="BAB09193.1"/>
    <property type="molecule type" value="Genomic_DNA"/>
</dbReference>
<dbReference type="EMBL" id="CP002688">
    <property type="protein sequence ID" value="AED94886.1"/>
    <property type="molecule type" value="Genomic_DNA"/>
</dbReference>
<dbReference type="RefSeq" id="NP_199105.1">
    <property type="nucleotide sequence ID" value="NM_123656.2"/>
</dbReference>
<dbReference type="SMR" id="Q9FMM7"/>
<dbReference type="BioGRID" id="19553">
    <property type="interactions" value="15"/>
</dbReference>
<dbReference type="FunCoup" id="Q9FMM7">
    <property type="interactions" value="290"/>
</dbReference>
<dbReference type="IntAct" id="Q9FMM7">
    <property type="interactions" value="18"/>
</dbReference>
<dbReference type="STRING" id="3702.Q9FMM7"/>
<dbReference type="PaxDb" id="3702-AT5G42910.1"/>
<dbReference type="EnsemblPlants" id="AT5G42910.1">
    <property type="protein sequence ID" value="AT5G42910.1"/>
    <property type="gene ID" value="AT5G42910"/>
</dbReference>
<dbReference type="GeneID" id="834303"/>
<dbReference type="Gramene" id="AT5G42910.1">
    <property type="protein sequence ID" value="AT5G42910.1"/>
    <property type="gene ID" value="AT5G42910"/>
</dbReference>
<dbReference type="KEGG" id="ath:AT5G42910"/>
<dbReference type="Araport" id="AT5G42910"/>
<dbReference type="TAIR" id="AT5G42910"/>
<dbReference type="eggNOG" id="ENOG502QPP6">
    <property type="taxonomic scope" value="Eukaryota"/>
</dbReference>
<dbReference type="HOGENOM" id="CLU_043238_1_0_1"/>
<dbReference type="InParanoid" id="Q9FMM7"/>
<dbReference type="OMA" id="IQPKAMV"/>
<dbReference type="PhylomeDB" id="Q9FMM7"/>
<dbReference type="PRO" id="PR:Q9FMM7"/>
<dbReference type="Proteomes" id="UP000006548">
    <property type="component" value="Chromosome 5"/>
</dbReference>
<dbReference type="ExpressionAtlas" id="Q9FMM7">
    <property type="expression patterns" value="baseline and differential"/>
</dbReference>
<dbReference type="GO" id="GO:0005634">
    <property type="term" value="C:nucleus"/>
    <property type="evidence" value="ECO:0007669"/>
    <property type="project" value="UniProtKB-SubCell"/>
</dbReference>
<dbReference type="GO" id="GO:0003677">
    <property type="term" value="F:DNA binding"/>
    <property type="evidence" value="ECO:0007669"/>
    <property type="project" value="UniProtKB-KW"/>
</dbReference>
<dbReference type="GO" id="GO:0003700">
    <property type="term" value="F:DNA-binding transcription factor activity"/>
    <property type="evidence" value="ECO:0000250"/>
    <property type="project" value="TAIR"/>
</dbReference>
<dbReference type="GO" id="GO:0009738">
    <property type="term" value="P:abscisic acid-activated signaling pathway"/>
    <property type="evidence" value="ECO:0007669"/>
    <property type="project" value="UniProtKB-KW"/>
</dbReference>
<dbReference type="GO" id="GO:0045893">
    <property type="term" value="P:positive regulation of DNA-templated transcription"/>
    <property type="evidence" value="ECO:0007669"/>
    <property type="project" value="InterPro"/>
</dbReference>
<dbReference type="CDD" id="cd14707">
    <property type="entry name" value="bZIP_plant_BZIP46"/>
    <property type="match status" value="1"/>
</dbReference>
<dbReference type="Gene3D" id="1.20.5.170">
    <property type="match status" value="1"/>
</dbReference>
<dbReference type="InterPro" id="IPR004827">
    <property type="entry name" value="bZIP"/>
</dbReference>
<dbReference type="InterPro" id="IPR043452">
    <property type="entry name" value="BZIP46-like"/>
</dbReference>
<dbReference type="InterPro" id="IPR046347">
    <property type="entry name" value="bZIP_sf"/>
</dbReference>
<dbReference type="PANTHER" id="PTHR22952:SF446">
    <property type="entry name" value="ABSCISIC ACID-INSENSITIVE 5-LIKE PROTEIN 5-RELATED"/>
    <property type="match status" value="1"/>
</dbReference>
<dbReference type="PANTHER" id="PTHR22952">
    <property type="entry name" value="CAMP-RESPONSE ELEMENT BINDING PROTEIN-RELATED"/>
    <property type="match status" value="1"/>
</dbReference>
<dbReference type="Pfam" id="PF00170">
    <property type="entry name" value="bZIP_1"/>
    <property type="match status" value="1"/>
</dbReference>
<dbReference type="SMART" id="SM00338">
    <property type="entry name" value="BRLZ"/>
    <property type="match status" value="1"/>
</dbReference>
<dbReference type="SUPFAM" id="SSF57959">
    <property type="entry name" value="Leucine zipper domain"/>
    <property type="match status" value="1"/>
</dbReference>
<dbReference type="PROSITE" id="PS50217">
    <property type="entry name" value="BZIP"/>
    <property type="match status" value="1"/>
</dbReference>
<dbReference type="PROSITE" id="PS00036">
    <property type="entry name" value="BZIP_BASIC"/>
    <property type="match status" value="1"/>
</dbReference>
<gene>
    <name type="primary">BZIP15</name>
    <name type="ordered locus">At5g42910</name>
    <name type="ORF">MBD2.11</name>
</gene>
<name>AI5L8_ARATH</name>